<dbReference type="EMBL" id="CP000438">
    <property type="protein sequence ID" value="ABJ14218.1"/>
    <property type="molecule type" value="Genomic_DNA"/>
</dbReference>
<dbReference type="RefSeq" id="WP_004365418.1">
    <property type="nucleotide sequence ID" value="NZ_CP034244.1"/>
</dbReference>
<dbReference type="SMR" id="A0A0H2ZHZ4"/>
<dbReference type="KEGG" id="pau:PA14_63910"/>
<dbReference type="HOGENOM" id="CLU_032828_0_1_6"/>
<dbReference type="BioCyc" id="PAER208963:G1G74-5404-MONOMER"/>
<dbReference type="Proteomes" id="UP000000653">
    <property type="component" value="Chromosome"/>
</dbReference>
<dbReference type="GO" id="GO:0005886">
    <property type="term" value="C:plasma membrane"/>
    <property type="evidence" value="ECO:0007669"/>
    <property type="project" value="UniProtKB-SubCell"/>
</dbReference>
<dbReference type="InterPro" id="IPR000620">
    <property type="entry name" value="EamA_dom"/>
</dbReference>
<dbReference type="PANTHER" id="PTHR22911">
    <property type="entry name" value="ACYL-MALONYL CONDENSING ENZYME-RELATED"/>
    <property type="match status" value="1"/>
</dbReference>
<dbReference type="PANTHER" id="PTHR22911:SF6">
    <property type="entry name" value="SOLUTE CARRIER FAMILY 35 MEMBER G1"/>
    <property type="match status" value="1"/>
</dbReference>
<dbReference type="Pfam" id="PF00892">
    <property type="entry name" value="EamA"/>
    <property type="match status" value="2"/>
</dbReference>
<dbReference type="SUPFAM" id="SSF103481">
    <property type="entry name" value="Multidrug resistance efflux transporter EmrE"/>
    <property type="match status" value="2"/>
</dbReference>
<protein>
    <recommendedName>
        <fullName evidence="6">Pseudopaline exporter CntI</fullName>
    </recommendedName>
</protein>
<feature type="chain" id="PRO_0000447265" description="Pseudopaline exporter CntI">
    <location>
        <begin position="1"/>
        <end position="284"/>
    </location>
</feature>
<feature type="transmembrane region" description="Helical" evidence="1">
    <location>
        <begin position="2"/>
        <end position="22"/>
    </location>
</feature>
<feature type="transmembrane region" description="Helical" evidence="1">
    <location>
        <begin position="34"/>
        <end position="54"/>
    </location>
</feature>
<feature type="transmembrane region" description="Helical" evidence="1">
    <location>
        <begin position="74"/>
        <end position="94"/>
    </location>
</feature>
<feature type="transmembrane region" description="Helical" evidence="1">
    <location>
        <begin position="96"/>
        <end position="116"/>
    </location>
</feature>
<feature type="transmembrane region" description="Helical" evidence="1">
    <location>
        <begin position="122"/>
        <end position="142"/>
    </location>
</feature>
<feature type="transmembrane region" description="Helical" evidence="1">
    <location>
        <begin position="147"/>
        <end position="167"/>
    </location>
</feature>
<feature type="transmembrane region" description="Helical" evidence="1">
    <location>
        <begin position="179"/>
        <end position="199"/>
    </location>
</feature>
<feature type="transmembrane region" description="Helical" evidence="1">
    <location>
        <begin position="209"/>
        <end position="229"/>
    </location>
</feature>
<feature type="transmembrane region" description="Helical" evidence="1">
    <location>
        <begin position="236"/>
        <end position="256"/>
    </location>
</feature>
<feature type="transmembrane region" description="Helical" evidence="1">
    <location>
        <begin position="259"/>
        <end position="279"/>
    </location>
</feature>
<feature type="domain" description="EamA 1" evidence="1">
    <location>
        <begin position="8"/>
        <end position="138"/>
    </location>
</feature>
<feature type="domain" description="EamA 2" evidence="1">
    <location>
        <begin position="151"/>
        <end position="279"/>
    </location>
</feature>
<proteinExistence type="evidence at transcript level"/>
<evidence type="ECO:0000255" key="1"/>
<evidence type="ECO:0000269" key="2">
    <source>
    </source>
</evidence>
<evidence type="ECO:0000269" key="3">
    <source>
    </source>
</evidence>
<evidence type="ECO:0000303" key="4">
    <source>
    </source>
</evidence>
<evidence type="ECO:0000303" key="5">
    <source>
    </source>
</evidence>
<evidence type="ECO:0000305" key="6"/>
<evidence type="ECO:0000305" key="7">
    <source>
    </source>
</evidence>
<evidence type="ECO:0000312" key="8">
    <source>
        <dbReference type="EMBL" id="ABJ14218.1"/>
    </source>
</evidence>
<organism>
    <name type="scientific">Pseudomonas aeruginosa (strain UCBPP-PA14)</name>
    <dbReference type="NCBI Taxonomy" id="208963"/>
    <lineage>
        <taxon>Bacteria</taxon>
        <taxon>Pseudomonadati</taxon>
        <taxon>Pseudomonadota</taxon>
        <taxon>Gammaproteobacteria</taxon>
        <taxon>Pseudomonadales</taxon>
        <taxon>Pseudomonadaceae</taxon>
        <taxon>Pseudomonas</taxon>
    </lineage>
</organism>
<gene>
    <name evidence="5" type="primary">cntI</name>
    <name evidence="4" type="synonym">zrmD</name>
    <name evidence="8" type="ordered locus">PA14_63910</name>
</gene>
<sequence>MVLDLLKSGVLLAVLASFTFSVMNALVKEASATLPAAEIVFFRSAIGTLLIYLLMRQAGVALSRQGVPMLLVRGVMGALYLVCYFYAIAHIPLADASILAHMSPFFVILFSALFLGERIPRAVYWLLLVVVLGALMIVKPFSYSSYSVYAVVGLLSAVFAAGASVAIRQLSARHHTYEIVFYFLAVATLVAIPLMWSDFVVPATLREWGLLLAIGVVSLLGQVFLTRAFSHESATIVAVTRYIGIVFNAGWGWLFWSEVPDALTIAGGVLIVVACIALSRTKKG</sequence>
<reference key="1">
    <citation type="journal article" date="2006" name="Genome Biol.">
        <title>Genomic analysis reveals that Pseudomonas aeruginosa virulence is combinatorial.</title>
        <authorList>
            <person name="Lee D.G."/>
            <person name="Urbach J.M."/>
            <person name="Wu G."/>
            <person name="Liberati N.T."/>
            <person name="Feinbaum R.L."/>
            <person name="Miyata S."/>
            <person name="Diggins L.T."/>
            <person name="He J."/>
            <person name="Saucier M."/>
            <person name="Deziel E."/>
            <person name="Friedman L."/>
            <person name="Li L."/>
            <person name="Grills G."/>
            <person name="Montgomery K."/>
            <person name="Kucherlapati R."/>
            <person name="Rahme L.G."/>
            <person name="Ausubel F.M."/>
        </authorList>
    </citation>
    <scope>NUCLEOTIDE SEQUENCE [LARGE SCALE GENOMIC DNA]</scope>
    <source>
        <strain>UCBPP-PA14</strain>
    </source>
</reference>
<reference key="2">
    <citation type="journal article" date="2017" name="Mol. Microbiol.">
        <title>Growth of Pseudomonas aeruginosa in zinc poor environments is promoted by a nicotianamine-related metallophore.</title>
        <authorList>
            <person name="Mastropasqua M.C."/>
            <person name="D'Orazio M."/>
            <person name="Cerasi M."/>
            <person name="Pacello F."/>
            <person name="Gismondi A."/>
            <person name="Canini A."/>
            <person name="Canuti L."/>
            <person name="Consalvo A."/>
            <person name="Ciavardelli D."/>
            <person name="Chirullo B."/>
            <person name="Pasquali P."/>
            <person name="Battistoni A."/>
        </authorList>
    </citation>
    <scope>INDUCTION</scope>
    <source>
        <strain>UCBPP-PA14</strain>
    </source>
</reference>
<reference key="3">
    <citation type="journal article" date="2017" name="Sci. Rep.">
        <title>Pseudomonas aeruginosa zinc uptake in chelating environment is primarily mediated by the metallophore pseudopaline.</title>
        <authorList>
            <person name="Lhospice S."/>
            <person name="Gomez N.O."/>
            <person name="Ouerdane L."/>
            <person name="Brutesco C."/>
            <person name="Ghssein G."/>
            <person name="Hajjar C."/>
            <person name="Liratni A."/>
            <person name="Wang S."/>
            <person name="Richaud P."/>
            <person name="Bleves S."/>
            <person name="Ball G."/>
            <person name="Borezee-Durant E."/>
            <person name="Lobinski R."/>
            <person name="Pignol D."/>
            <person name="Arnoux P."/>
            <person name="Voulhoux R."/>
        </authorList>
    </citation>
    <scope>FUNCTION</scope>
    <scope>SUBCELLULAR LOCATION</scope>
    <scope>INDUCTION</scope>
    <scope>DISRUPTION PHENOTYPE</scope>
    <source>
        <strain>UCBPP-PA14</strain>
    </source>
</reference>
<name>CNTI_PSEAB</name>
<keyword id="KW-0997">Cell inner membrane</keyword>
<keyword id="KW-1003">Cell membrane</keyword>
<keyword id="KW-0472">Membrane</keyword>
<keyword id="KW-0677">Repeat</keyword>
<keyword id="KW-0812">Transmembrane</keyword>
<keyword id="KW-1133">Transmembrane helix</keyword>
<keyword id="KW-0813">Transport</keyword>
<comment type="function">
    <text evidence="3">Transports the metallophore pseudopaline, which is involved in the acquisition of nickel and zinc, and thus enables bacterial growth inside the host, where metal access is limited. Is probably involved in the export of pseudopaline.</text>
</comment>
<comment type="subcellular location">
    <subcellularLocation>
        <location evidence="7">Cell inner membrane</location>
        <topology evidence="1">Multi-pass membrane protein</topology>
    </subcellularLocation>
</comment>
<comment type="induction">
    <text evidence="2 3">Is part of the operon cntOLMI that is negatively regulated by zinc level through the Zur repressor, which leads to transcriptional activation of this operon under zinc depletion.</text>
</comment>
<comment type="disruption phenotype">
    <text evidence="3">Mutant shows a large decrease in the extracellular pseudopaline level, with a concomitant increase in the intracellular space. Mutant is unable to grow in airway mucus secretions (AMS) and is impaired in iron accumulation in this media supplemented with iron.</text>
</comment>
<comment type="similarity">
    <text evidence="6">Belongs to the EamA transporter family.</text>
</comment>
<accession>A0A0H2ZHZ4</accession>